<keyword id="KW-0002">3D-structure</keyword>
<keyword id="KW-0009">Actin-binding</keyword>
<keyword id="KW-0966">Cell projection</keyword>
<keyword id="KW-0175">Coiled coil</keyword>
<keyword id="KW-0963">Cytoplasm</keyword>
<keyword id="KW-0206">Cytoskeleton</keyword>
<keyword id="KW-0903">Direct protein sequencing</keyword>
<keyword id="KW-0597">Phosphoprotein</keyword>
<keyword id="KW-1267">Proteomics identification</keyword>
<keyword id="KW-1185">Reference proteome</keyword>
<name>FHOD1_HUMAN</name>
<protein>
    <recommendedName>
        <fullName>FH1/FH2 domain-containing protein 1</fullName>
    </recommendedName>
    <alternativeName>
        <fullName>Formin homolog overexpressed in spleen 1</fullName>
        <shortName>FHOS</shortName>
    </alternativeName>
    <alternativeName>
        <fullName>Formin homology 2 domain-containing protein 1</fullName>
    </alternativeName>
</protein>
<feature type="initiator methionine" description="Removed" evidence="5">
    <location>
        <position position="1"/>
    </location>
</feature>
<feature type="chain" id="PRO_0000194905" description="FH1/FH2 domain-containing protein 1">
    <location>
        <begin position="2"/>
        <end position="1164"/>
    </location>
</feature>
<feature type="domain" description="GBD/FH3" evidence="2">
    <location>
        <begin position="53"/>
        <end position="458"/>
    </location>
</feature>
<feature type="domain" description="FH1">
    <location>
        <begin position="487"/>
        <end position="615"/>
    </location>
</feature>
<feature type="domain" description="FH2" evidence="3">
    <location>
        <begin position="616"/>
        <end position="1013"/>
    </location>
</feature>
<feature type="domain" description="DAD">
    <location>
        <begin position="1053"/>
        <end position="1133"/>
    </location>
</feature>
<feature type="region of interest" description="Disordered" evidence="4">
    <location>
        <begin position="340"/>
        <end position="411"/>
    </location>
</feature>
<feature type="region of interest" description="Disordered" evidence="4">
    <location>
        <begin position="470"/>
        <end position="500"/>
    </location>
</feature>
<feature type="region of interest" description="Disordered" evidence="4">
    <location>
        <begin position="566"/>
        <end position="619"/>
    </location>
</feature>
<feature type="region of interest" description="Interaction with ROCK1" evidence="10">
    <location>
        <begin position="612"/>
        <end position="807"/>
    </location>
</feature>
<feature type="region of interest" description="Disordered" evidence="4">
    <location>
        <begin position="1020"/>
        <end position="1143"/>
    </location>
</feature>
<feature type="coiled-coil region" evidence="1">
    <location>
        <begin position="884"/>
        <end position="921"/>
    </location>
</feature>
<feature type="compositionally biased region" description="Basic and acidic residues" evidence="4">
    <location>
        <begin position="355"/>
        <end position="368"/>
    </location>
</feature>
<feature type="compositionally biased region" description="Low complexity" evidence="4">
    <location>
        <begin position="402"/>
        <end position="411"/>
    </location>
</feature>
<feature type="compositionally biased region" description="Pro residues" evidence="4">
    <location>
        <begin position="571"/>
        <end position="608"/>
    </location>
</feature>
<feature type="compositionally biased region" description="Low complexity" evidence="4">
    <location>
        <begin position="1028"/>
        <end position="1041"/>
    </location>
</feature>
<feature type="compositionally biased region" description="Polar residues" evidence="4">
    <location>
        <begin position="1073"/>
        <end position="1089"/>
    </location>
</feature>
<feature type="compositionally biased region" description="Basic residues" evidence="4">
    <location>
        <begin position="1127"/>
        <end position="1142"/>
    </location>
</feature>
<feature type="modified residue" description="Phosphoserine" evidence="12 15">
    <location>
        <position position="367"/>
    </location>
</feature>
<feature type="modified residue" description="Phosphoserine" evidence="15 16">
    <location>
        <position position="486"/>
    </location>
</feature>
<feature type="modified residue" description="Phosphothreonine" evidence="12">
    <location>
        <position position="495"/>
    </location>
</feature>
<feature type="modified residue" description="Phosphoserine" evidence="12 13 16">
    <location>
        <position position="498"/>
    </location>
</feature>
<feature type="modified residue" description="Phosphoserine" evidence="12 14 15 16">
    <location>
        <position position="523"/>
    </location>
</feature>
<feature type="modified residue" description="Phosphoserine" evidence="15 17">
    <location>
        <position position="573"/>
    </location>
</feature>
<feature type="modified residue" description="Phosphothreonine" evidence="14 16">
    <location>
        <position position="690"/>
    </location>
</feature>
<feature type="sequence conflict" description="In Ref. 1; AAD39906 and 3; AAO38757." evidence="11" ref="1 3">
    <original>S</original>
    <variation>T</variation>
    <location>
        <position position="249"/>
    </location>
</feature>
<feature type="sequence conflict" description="In Ref. 3; AAO38757." evidence="11" ref="3">
    <original>E</original>
    <variation>D</variation>
    <location>
        <position position="264"/>
    </location>
</feature>
<feature type="sequence conflict" description="In Ref. 2; BAD06250." evidence="11" ref="2">
    <original>T</original>
    <variation>M</variation>
    <location>
        <position position="277"/>
    </location>
</feature>
<feature type="sequence conflict" description="In Ref. 1; AAD39906 and 3; AAO38757." evidence="11" ref="1 3">
    <original>EA</original>
    <variation>DT</variation>
    <location>
        <begin position="307"/>
        <end position="308"/>
    </location>
</feature>
<feature type="sequence conflict" description="In Ref. 3; AAO38757." evidence="11" ref="3">
    <original>E</original>
    <variation>D</variation>
    <location>
        <position position="359"/>
    </location>
</feature>
<feature type="sequence conflict" description="In Ref. 3; AAO38757." evidence="11" ref="3">
    <original>S</original>
    <variation>T</variation>
    <location>
        <position position="387"/>
    </location>
</feature>
<feature type="sequence conflict" description="In Ref. 6; BAD92821." evidence="11" ref="6">
    <original>P</original>
    <variation>L</variation>
    <location>
        <position position="533"/>
    </location>
</feature>
<feature type="sequence conflict" description="In Ref. 1; AAD39906." evidence="11" ref="1">
    <original>EL</original>
    <variation>DV</variation>
    <location>
        <begin position="633"/>
        <end position="634"/>
    </location>
</feature>
<feature type="sequence conflict" description="In Ref. 3; AAO38757." evidence="11" ref="3">
    <original>R</original>
    <variation>Q</variation>
    <location>
        <position position="689"/>
    </location>
</feature>
<feature type="sequence conflict" description="In Ref. 1; AAD39906." evidence="11" ref="1">
    <original>S</original>
    <variation>T</variation>
    <location>
        <position position="700"/>
    </location>
</feature>
<feature type="sequence conflict" description="In Ref. 3; AAO38757." evidence="11" ref="3">
    <original>E</original>
    <variation>G</variation>
    <location>
        <position position="745"/>
    </location>
</feature>
<feature type="sequence conflict" description="In Ref. 1; AAD39906." evidence="11" ref="1">
    <original>E</original>
    <variation>G</variation>
    <location>
        <position position="751"/>
    </location>
</feature>
<feature type="sequence conflict" description="In Ref. 1; AAD39906." evidence="11" ref="1">
    <original>E</original>
    <variation>D</variation>
    <location>
        <position position="849"/>
    </location>
</feature>
<feature type="sequence conflict" description="In Ref. 1; AAD39906 and 3; AAO38757." evidence="11" ref="1 3">
    <original>P</original>
    <variation>L</variation>
    <location>
        <position position="1061"/>
    </location>
</feature>
<feature type="strand" evidence="18">
    <location>
        <begin position="15"/>
        <end position="22"/>
    </location>
</feature>
<feature type="helix" evidence="19">
    <location>
        <begin position="28"/>
        <end position="30"/>
    </location>
</feature>
<feature type="strand" evidence="18">
    <location>
        <begin position="36"/>
        <end position="39"/>
    </location>
</feature>
<feature type="strand" evidence="18">
    <location>
        <begin position="42"/>
        <end position="46"/>
    </location>
</feature>
<feature type="helix" evidence="18">
    <location>
        <begin position="51"/>
        <end position="53"/>
    </location>
</feature>
<feature type="helix" evidence="18">
    <location>
        <begin position="55"/>
        <end position="61"/>
    </location>
</feature>
<feature type="strand" evidence="18">
    <location>
        <begin position="68"/>
        <end position="75"/>
    </location>
</feature>
<feature type="turn" evidence="18">
    <location>
        <begin position="76"/>
        <end position="78"/>
    </location>
</feature>
<feature type="strand" evidence="19">
    <location>
        <begin position="84"/>
        <end position="86"/>
    </location>
</feature>
<feature type="turn" evidence="18">
    <location>
        <begin position="88"/>
        <end position="93"/>
    </location>
</feature>
<feature type="helix" evidence="18">
    <location>
        <begin position="98"/>
        <end position="100"/>
    </location>
</feature>
<feature type="helix" evidence="18">
    <location>
        <begin position="102"/>
        <end position="104"/>
    </location>
</feature>
<feature type="strand" evidence="18">
    <location>
        <begin position="109"/>
        <end position="114"/>
    </location>
</feature>
<feature type="helix" evidence="18">
    <location>
        <begin position="116"/>
        <end position="129"/>
    </location>
</feature>
<feature type="helix" evidence="18">
    <location>
        <begin position="132"/>
        <end position="147"/>
    </location>
</feature>
<feature type="helix" evidence="18">
    <location>
        <begin position="152"/>
        <end position="158"/>
    </location>
</feature>
<feature type="helix" evidence="18">
    <location>
        <begin position="161"/>
        <end position="169"/>
    </location>
</feature>
<feature type="helix" evidence="18">
    <location>
        <begin position="174"/>
        <end position="187"/>
    </location>
</feature>
<feature type="helix" evidence="18">
    <location>
        <begin position="191"/>
        <end position="199"/>
    </location>
</feature>
<feature type="helix" evidence="18">
    <location>
        <begin position="201"/>
        <end position="209"/>
    </location>
</feature>
<feature type="helix" evidence="18">
    <location>
        <begin position="210"/>
        <end position="212"/>
    </location>
</feature>
<feature type="helix" evidence="18">
    <location>
        <begin position="216"/>
        <end position="232"/>
    </location>
</feature>
<feature type="helix" evidence="18">
    <location>
        <begin position="234"/>
        <end position="236"/>
    </location>
</feature>
<feature type="helix" evidence="18">
    <location>
        <begin position="237"/>
        <end position="251"/>
    </location>
</feature>
<feature type="helix" evidence="18">
    <location>
        <begin position="257"/>
        <end position="263"/>
    </location>
</feature>
<feature type="turn" evidence="18">
    <location>
        <begin position="264"/>
        <end position="267"/>
    </location>
</feature>
<feature type="helix" evidence="18">
    <location>
        <begin position="271"/>
        <end position="287"/>
    </location>
</feature>
<feature type="helix" evidence="18">
    <location>
        <begin position="291"/>
        <end position="303"/>
    </location>
</feature>
<feature type="helix" evidence="18">
    <location>
        <begin position="306"/>
        <end position="314"/>
    </location>
</feature>
<feature type="helix" evidence="18">
    <location>
        <begin position="321"/>
        <end position="338"/>
    </location>
</feature>
<sequence length="1164" mass="126551">MAGGEDRGDGEPVSVVTVRVQYLEDTDPFACANFPEPRRAPTCSLDGALPLGAQIPAVHRLLGAPLKLEDCALQVSPSGYYLDTELSLEEQREMLEGFYEEISKGRKPTLILRTQLSVRVNAILEKLYSSSGPELRRSLFSLKQIFQEDKDLVPEFVHSEGLSCLIRVGAAADHNYQSYILRALGQLMLFVDGMLGVVAHSDTIQWLYTLCASLSRLVVKTALKLLLVFVEYSENNAPLFIRAVNSVASTTGAPPWANLVSILEEKNGADPELLVYTVTLINKTLAALPDQDSFYDVTDALEQQGMEALVQRHLGTAGTDVDLRTQLVLYENALKLEDGDIEEAPGAGGRRERRKPSSEEGKRSRRSLEGGGCPARAPEPGPTGPASPVGPTSSTGPALLTGPASSPVGPPSGLQASVNLFPTISVAPSADTSSERSIYKARFLENVAAAETEKQVALAQGRAETLAGAMPNEAGGHPDARQLWDSPETAPAARTPQSPAPCVLLRAQRSLAPEPKEPLIPASPKAEPIWELPTRAPRLSIGDLDFSDLGEDEDQDMLNVESVEAGKDIPAPSPPLPLLSGVPPPPPLPPPPPIKGPFPPPPPLPLAAPLPHSVPDSSALPTKRKTVKLFWRELKLAGGHGVSASRFGPCATLWASLDPVSVDTARLEHLFESRAKEVLPSKKAGEGRRTMTTVLDPKRSNAINIGLTTLPPVHVIKAALLNFDEFAVSKDGIEKLLTMMPTEEERQKIEEAQLANPDIPLGPAENFLMTLASIGGLAARLQLWAFKLDYDSMEREIAEPLFDLKVGMEQLVQNATFRCILATLLAVGNFLNGSQSSGFELSYLEKVSEVKDTVRRQSLLHHLCSLVLQTRPESSDLYSEIPALTRCAKVDFEQLTENLGQLERRSRAAEESLRSLAKHELAPALRARLTHFLDQCARRVAMLRIVHRRVCNRFHAFLLYLGYTPQAAREVRIMQFCHTLREFALEYRTCRERVLQQQQKQATYRERNKTRGRMITETEKFSGVAGEAPSNPSVPVAVSSGPGRGDADSHASMKSLLTSRPEDTTHNRRSRGMVQSSSPIMPTVGPSTASPEEPPGSSLPSDTSDEIMDLLVQSVTKSSPRALAARERKRSRGNRKSLRRTLKSGLGDDLVQALGLSKGPGLEV</sequence>
<comment type="function">
    <text evidence="6 8 10">Required for the assembly of F-actin structures, such as stress fibers. Depends on the Rho-ROCK cascade for its activity. Contributes to the coordination of microtubules with actin fibers and plays a role in cell elongation. Acts synergistically with ROCK1 to promote SRC-dependent non-apoptotic plasma membrane blebbing.</text>
</comment>
<comment type="subunit">
    <text evidence="6 7 10">Self-associates via the FH2 domain. Binds to F-actin via its N-terminus. Binds to the cytoplasmic domain of CD21 via its C-terminus. Interacts with ROCK1 in a Src-dependent manner.</text>
</comment>
<comment type="interaction">
    <interactant intactId="EBI-348433">
        <id>Q9Y613</id>
    </interactant>
    <interactant intactId="EBI-348433">
        <id>Q9Y613</id>
        <label>FHOD1</label>
    </interactant>
    <organismsDiffer>false</organismsDiffer>
    <experiments>9</experiments>
</comment>
<comment type="interaction">
    <interactant intactId="EBI-348433">
        <id>Q9Y613</id>
    </interactant>
    <interactant intactId="EBI-2372294">
        <id>Q8WXH0</id>
        <label>SYNE2</label>
    </interactant>
    <organismsDiffer>false</organismsDiffer>
    <experiments>4</experiments>
</comment>
<comment type="interaction">
    <interactant intactId="EBI-348433">
        <id>Q9Y613</id>
    </interactant>
    <interactant intactId="EBI-81290">
        <id>P19474</id>
        <label>TRIM21</label>
    </interactant>
    <organismsDiffer>false</organismsDiffer>
    <experiments>3</experiments>
</comment>
<comment type="interaction">
    <interactant intactId="EBI-348433">
        <id>Q9Y613</id>
    </interactant>
    <interactant intactId="EBI-16108623">
        <id>Q6ZWQ0-1</id>
        <label>Syne2</label>
    </interactant>
    <organismsDiffer>true</organismsDiffer>
    <experiments>2</experiments>
</comment>
<comment type="subcellular location">
    <subcellularLocation>
        <location>Cytoplasm</location>
    </subcellularLocation>
    <subcellularLocation>
        <location>Cytoplasm</location>
        <location>Cytoskeleton</location>
    </subcellularLocation>
    <subcellularLocation>
        <location>Cell projection</location>
        <location>Bleb</location>
    </subcellularLocation>
    <text>Predominantly cytoplasmic.</text>
</comment>
<comment type="tissue specificity">
    <text>Ubiquitous. Highly expressed in spleen.</text>
</comment>
<comment type="domain">
    <text evidence="9">The DAD domain regulates activation via by an autoinhibitory interaction with the GBD/FH3 domain. This autoinhibition is released upon competitive binding of an activated GTPase. The release of DAD allows the FH2 domain to then nucleate and elongate nonbranched actin filaments.</text>
</comment>
<comment type="PTM">
    <text evidence="10">Phosphorylated by ROCK1.</text>
</comment>
<comment type="similarity">
    <text evidence="11">Belongs to the formin homology family.</text>
</comment>
<gene>
    <name type="primary">FHOD1</name>
    <name type="synonym">FHOS</name>
    <name type="synonym">FHOS1</name>
</gene>
<evidence type="ECO:0000255" key="1"/>
<evidence type="ECO:0000255" key="2">
    <source>
        <dbReference type="PROSITE-ProRule" id="PRU00579"/>
    </source>
</evidence>
<evidence type="ECO:0000255" key="3">
    <source>
        <dbReference type="PROSITE-ProRule" id="PRU00774"/>
    </source>
</evidence>
<evidence type="ECO:0000256" key="4">
    <source>
        <dbReference type="SAM" id="MobiDB-lite"/>
    </source>
</evidence>
<evidence type="ECO:0000269" key="5">
    <source>
    </source>
</evidence>
<evidence type="ECO:0000269" key="6">
    <source>
    </source>
</evidence>
<evidence type="ECO:0000269" key="7">
    <source>
    </source>
</evidence>
<evidence type="ECO:0000269" key="8">
    <source>
    </source>
</evidence>
<evidence type="ECO:0000269" key="9">
    <source>
    </source>
</evidence>
<evidence type="ECO:0000269" key="10">
    <source>
    </source>
</evidence>
<evidence type="ECO:0000305" key="11"/>
<evidence type="ECO:0007744" key="12">
    <source>
    </source>
</evidence>
<evidence type="ECO:0007744" key="13">
    <source>
    </source>
</evidence>
<evidence type="ECO:0007744" key="14">
    <source>
    </source>
</evidence>
<evidence type="ECO:0007744" key="15">
    <source>
    </source>
</evidence>
<evidence type="ECO:0007744" key="16">
    <source>
    </source>
</evidence>
<evidence type="ECO:0007744" key="17">
    <source>
    </source>
</evidence>
<evidence type="ECO:0007829" key="18">
    <source>
        <dbReference type="PDB" id="3DAD"/>
    </source>
</evidence>
<evidence type="ECO:0007829" key="19">
    <source>
        <dbReference type="PDB" id="6XF1"/>
    </source>
</evidence>
<organism>
    <name type="scientific">Homo sapiens</name>
    <name type="common">Human</name>
    <dbReference type="NCBI Taxonomy" id="9606"/>
    <lineage>
        <taxon>Eukaryota</taxon>
        <taxon>Metazoa</taxon>
        <taxon>Chordata</taxon>
        <taxon>Craniata</taxon>
        <taxon>Vertebrata</taxon>
        <taxon>Euteleostomi</taxon>
        <taxon>Mammalia</taxon>
        <taxon>Eutheria</taxon>
        <taxon>Euarchontoglires</taxon>
        <taxon>Primates</taxon>
        <taxon>Haplorrhini</taxon>
        <taxon>Catarrhini</taxon>
        <taxon>Hominidae</taxon>
        <taxon>Homo</taxon>
    </lineage>
</organism>
<proteinExistence type="evidence at protein level"/>
<accession>Q9Y613</accession>
<accession>Q59F76</accession>
<accession>Q6Y1F2</accession>
<accession>Q76MS8</accession>
<accession>Q8N521</accession>
<dbReference type="EMBL" id="AF113615">
    <property type="protein sequence ID" value="AAD39906.1"/>
    <property type="molecule type" value="mRNA"/>
</dbReference>
<dbReference type="EMBL" id="AB041046">
    <property type="protein sequence ID" value="BAD06250.1"/>
    <property type="molecule type" value="mRNA"/>
</dbReference>
<dbReference type="EMBL" id="AY192154">
    <property type="protein sequence ID" value="AAO38757.1"/>
    <property type="molecule type" value="mRNA"/>
</dbReference>
<dbReference type="EMBL" id="BC033084">
    <property type="protein sequence ID" value="AAH33084.1"/>
    <property type="molecule type" value="mRNA"/>
</dbReference>
<dbReference type="EMBL" id="AB209584">
    <property type="protein sequence ID" value="BAD92821.1"/>
    <property type="molecule type" value="mRNA"/>
</dbReference>
<dbReference type="CCDS" id="CCDS10834.1"/>
<dbReference type="RefSeq" id="NP_037373.2">
    <property type="nucleotide sequence ID" value="NM_013241.3"/>
</dbReference>
<dbReference type="PDB" id="3DAD">
    <property type="method" value="X-ray"/>
    <property type="resolution" value="2.30 A"/>
    <property type="chains" value="A/B=1-339"/>
</dbReference>
<dbReference type="PDB" id="6XF1">
    <property type="method" value="X-ray"/>
    <property type="resolution" value="2.80 A"/>
    <property type="chains" value="B/D=14-334"/>
</dbReference>
<dbReference type="PDB" id="6XF2">
    <property type="method" value="X-ray"/>
    <property type="resolution" value="7.11 A"/>
    <property type="chains" value="B/D=14-334"/>
</dbReference>
<dbReference type="PDBsum" id="3DAD"/>
<dbReference type="PDBsum" id="6XF1"/>
<dbReference type="PDBsum" id="6XF2"/>
<dbReference type="SMR" id="Q9Y613"/>
<dbReference type="BioGRID" id="118877">
    <property type="interactions" value="77"/>
</dbReference>
<dbReference type="DIP" id="DIP-31134N"/>
<dbReference type="FunCoup" id="Q9Y613">
    <property type="interactions" value="502"/>
</dbReference>
<dbReference type="IntAct" id="Q9Y613">
    <property type="interactions" value="43"/>
</dbReference>
<dbReference type="MINT" id="Q9Y613"/>
<dbReference type="STRING" id="9606.ENSP00000258201"/>
<dbReference type="GlyGen" id="Q9Y613">
    <property type="glycosylation" value="4 sites, 1 O-linked glycan (1 site)"/>
</dbReference>
<dbReference type="iPTMnet" id="Q9Y613"/>
<dbReference type="MetOSite" id="Q9Y613"/>
<dbReference type="PhosphoSitePlus" id="Q9Y613"/>
<dbReference type="SwissPalm" id="Q9Y613"/>
<dbReference type="BioMuta" id="FHOD1"/>
<dbReference type="DMDM" id="62512187"/>
<dbReference type="jPOST" id="Q9Y613"/>
<dbReference type="MassIVE" id="Q9Y613"/>
<dbReference type="PaxDb" id="9606-ENSP00000258201"/>
<dbReference type="PeptideAtlas" id="Q9Y613"/>
<dbReference type="ProteomicsDB" id="86575"/>
<dbReference type="Pumba" id="Q9Y613"/>
<dbReference type="Antibodypedia" id="15694">
    <property type="antibodies" value="158 antibodies from 26 providers"/>
</dbReference>
<dbReference type="DNASU" id="29109"/>
<dbReference type="Ensembl" id="ENST00000258201.9">
    <property type="protein sequence ID" value="ENSP00000258201.4"/>
    <property type="gene ID" value="ENSG00000135723.14"/>
</dbReference>
<dbReference type="GeneID" id="29109"/>
<dbReference type="KEGG" id="hsa:29109"/>
<dbReference type="MANE-Select" id="ENST00000258201.9">
    <property type="protein sequence ID" value="ENSP00000258201.4"/>
    <property type="RefSeq nucleotide sequence ID" value="NM_013241.3"/>
    <property type="RefSeq protein sequence ID" value="NP_037373.2"/>
</dbReference>
<dbReference type="UCSC" id="uc002esl.4">
    <property type="organism name" value="human"/>
</dbReference>
<dbReference type="AGR" id="HGNC:17905"/>
<dbReference type="CTD" id="29109"/>
<dbReference type="DisGeNET" id="29109"/>
<dbReference type="GeneCards" id="FHOD1"/>
<dbReference type="HGNC" id="HGNC:17905">
    <property type="gene designation" value="FHOD1"/>
</dbReference>
<dbReference type="HPA" id="ENSG00000135723">
    <property type="expression patterns" value="Tissue enhanced (lymphoid tissue, skeletal muscle)"/>
</dbReference>
<dbReference type="MIM" id="606881">
    <property type="type" value="gene"/>
</dbReference>
<dbReference type="neXtProt" id="NX_Q9Y613"/>
<dbReference type="OpenTargets" id="ENSG00000135723"/>
<dbReference type="PharmGKB" id="PA28143"/>
<dbReference type="VEuPathDB" id="HostDB:ENSG00000135723"/>
<dbReference type="eggNOG" id="KOG1925">
    <property type="taxonomic scope" value="Eukaryota"/>
</dbReference>
<dbReference type="GeneTree" id="ENSGT00940000160212"/>
<dbReference type="HOGENOM" id="CLU_000814_0_0_1"/>
<dbReference type="InParanoid" id="Q9Y613"/>
<dbReference type="OMA" id="VRVMQFC"/>
<dbReference type="OrthoDB" id="9806920at2759"/>
<dbReference type="PAN-GO" id="Q9Y613">
    <property type="GO annotations" value="5 GO annotations based on evolutionary models"/>
</dbReference>
<dbReference type="PhylomeDB" id="Q9Y613"/>
<dbReference type="TreeFam" id="TF316268"/>
<dbReference type="PathwayCommons" id="Q9Y613"/>
<dbReference type="SignaLink" id="Q9Y613"/>
<dbReference type="SIGNOR" id="Q9Y613"/>
<dbReference type="BioGRID-ORCS" id="29109">
    <property type="hits" value="9 hits in 1159 CRISPR screens"/>
</dbReference>
<dbReference type="ChiTaRS" id="FHOD1">
    <property type="organism name" value="human"/>
</dbReference>
<dbReference type="EvolutionaryTrace" id="Q9Y613"/>
<dbReference type="GeneWiki" id="FHOD1"/>
<dbReference type="GenomeRNAi" id="29109"/>
<dbReference type="Pharos" id="Q9Y613">
    <property type="development level" value="Tbio"/>
</dbReference>
<dbReference type="PRO" id="PR:Q9Y613"/>
<dbReference type="Proteomes" id="UP000005640">
    <property type="component" value="Chromosome 16"/>
</dbReference>
<dbReference type="RNAct" id="Q9Y613">
    <property type="molecule type" value="protein"/>
</dbReference>
<dbReference type="Bgee" id="ENSG00000135723">
    <property type="expression patterns" value="Expressed in spleen and 133 other cell types or tissues"/>
</dbReference>
<dbReference type="ExpressionAtlas" id="Q9Y613">
    <property type="expression patterns" value="baseline and differential"/>
</dbReference>
<dbReference type="GO" id="GO:0032059">
    <property type="term" value="C:bleb"/>
    <property type="evidence" value="ECO:0007669"/>
    <property type="project" value="UniProtKB-SubCell"/>
</dbReference>
<dbReference type="GO" id="GO:0005737">
    <property type="term" value="C:cytoplasm"/>
    <property type="evidence" value="ECO:0000318"/>
    <property type="project" value="GO_Central"/>
</dbReference>
<dbReference type="GO" id="GO:0005856">
    <property type="term" value="C:cytoskeleton"/>
    <property type="evidence" value="ECO:0000318"/>
    <property type="project" value="GO_Central"/>
</dbReference>
<dbReference type="GO" id="GO:0005829">
    <property type="term" value="C:cytosol"/>
    <property type="evidence" value="ECO:0000314"/>
    <property type="project" value="HPA"/>
</dbReference>
<dbReference type="GO" id="GO:0014704">
    <property type="term" value="C:intercalated disc"/>
    <property type="evidence" value="ECO:0007669"/>
    <property type="project" value="Ensembl"/>
</dbReference>
<dbReference type="GO" id="GO:0016020">
    <property type="term" value="C:membrane"/>
    <property type="evidence" value="ECO:0007005"/>
    <property type="project" value="UniProtKB"/>
</dbReference>
<dbReference type="GO" id="GO:0005654">
    <property type="term" value="C:nucleoplasm"/>
    <property type="evidence" value="ECO:0000314"/>
    <property type="project" value="HPA"/>
</dbReference>
<dbReference type="GO" id="GO:0005634">
    <property type="term" value="C:nucleus"/>
    <property type="evidence" value="ECO:0000314"/>
    <property type="project" value="BHF-UCL"/>
</dbReference>
<dbReference type="GO" id="GO:0051015">
    <property type="term" value="F:actin filament binding"/>
    <property type="evidence" value="ECO:0000318"/>
    <property type="project" value="GO_Central"/>
</dbReference>
<dbReference type="GO" id="GO:0042802">
    <property type="term" value="F:identical protein binding"/>
    <property type="evidence" value="ECO:0000353"/>
    <property type="project" value="IntAct"/>
</dbReference>
<dbReference type="GO" id="GO:0030866">
    <property type="term" value="P:cortical actin cytoskeleton organization"/>
    <property type="evidence" value="ECO:0000318"/>
    <property type="project" value="GO_Central"/>
</dbReference>
<dbReference type="GO" id="GO:0051660">
    <property type="term" value="P:establishment of centrosome localization"/>
    <property type="evidence" value="ECO:0007669"/>
    <property type="project" value="Ensembl"/>
</dbReference>
<dbReference type="GO" id="GO:0007097">
    <property type="term" value="P:nuclear migration"/>
    <property type="evidence" value="ECO:0007669"/>
    <property type="project" value="Ensembl"/>
</dbReference>
<dbReference type="GO" id="GO:0051496">
    <property type="term" value="P:positive regulation of stress fiber assembly"/>
    <property type="evidence" value="ECO:0000314"/>
    <property type="project" value="BHF-UCL"/>
</dbReference>
<dbReference type="GO" id="GO:0045944">
    <property type="term" value="P:positive regulation of transcription by RNA polymerase II"/>
    <property type="evidence" value="ECO:0000314"/>
    <property type="project" value="BHF-UCL"/>
</dbReference>
<dbReference type="GO" id="GO:0051492">
    <property type="term" value="P:regulation of stress fiber assembly"/>
    <property type="evidence" value="ECO:0000315"/>
    <property type="project" value="CAFA"/>
</dbReference>
<dbReference type="DisProt" id="DP00448"/>
<dbReference type="FunFam" id="1.25.10.10:FF:000056">
    <property type="entry name" value="FH1/FH2 domain-containing protein 3 isoform X1"/>
    <property type="match status" value="1"/>
</dbReference>
<dbReference type="FunFam" id="1.20.58.2220:FF:000004">
    <property type="entry name" value="Formin homology 2 domain-containing 3"/>
    <property type="match status" value="1"/>
</dbReference>
<dbReference type="Gene3D" id="1.20.58.2220">
    <property type="entry name" value="Formin, FH2 domain"/>
    <property type="match status" value="1"/>
</dbReference>
<dbReference type="Gene3D" id="1.25.10.10">
    <property type="entry name" value="Leucine-rich Repeat Variant"/>
    <property type="match status" value="1"/>
</dbReference>
<dbReference type="InterPro" id="IPR011989">
    <property type="entry name" value="ARM-like"/>
</dbReference>
<dbReference type="InterPro" id="IPR016024">
    <property type="entry name" value="ARM-type_fold"/>
</dbReference>
<dbReference type="InterPro" id="IPR015425">
    <property type="entry name" value="FH2_Formin"/>
</dbReference>
<dbReference type="InterPro" id="IPR042201">
    <property type="entry name" value="FH2_Formin_sf"/>
</dbReference>
<dbReference type="InterPro" id="IPR056771">
    <property type="entry name" value="FH3_FHOD1-3-like"/>
</dbReference>
<dbReference type="InterPro" id="IPR041387">
    <property type="entry name" value="FHOD1_GBD_N"/>
</dbReference>
<dbReference type="InterPro" id="IPR014768">
    <property type="entry name" value="GBD/FH3_dom"/>
</dbReference>
<dbReference type="PANTHER" id="PTHR45920:SF2">
    <property type="entry name" value="FH1_FH2 DOMAIN-CONTAINING PROTEIN 1"/>
    <property type="match status" value="1"/>
</dbReference>
<dbReference type="PANTHER" id="PTHR45920">
    <property type="entry name" value="FORMIN HOMOLOGY 2 DOMAIN CONTAINING, ISOFORM I"/>
    <property type="match status" value="1"/>
</dbReference>
<dbReference type="Pfam" id="PF02181">
    <property type="entry name" value="FH2"/>
    <property type="match status" value="1"/>
</dbReference>
<dbReference type="Pfam" id="PF24959">
    <property type="entry name" value="FH3_FHOD1-3"/>
    <property type="match status" value="1"/>
</dbReference>
<dbReference type="Pfam" id="PF18382">
    <property type="entry name" value="Formin_GBD_N"/>
    <property type="match status" value="1"/>
</dbReference>
<dbReference type="SMART" id="SM00498">
    <property type="entry name" value="FH2"/>
    <property type="match status" value="1"/>
</dbReference>
<dbReference type="SUPFAM" id="SSF48371">
    <property type="entry name" value="ARM repeat"/>
    <property type="match status" value="1"/>
</dbReference>
<dbReference type="SUPFAM" id="SSF101447">
    <property type="entry name" value="Formin homology 2 domain (FH2 domain)"/>
    <property type="match status" value="1"/>
</dbReference>
<dbReference type="PROSITE" id="PS51444">
    <property type="entry name" value="FH2"/>
    <property type="match status" value="1"/>
</dbReference>
<dbReference type="PROSITE" id="PS51232">
    <property type="entry name" value="GBD_FH3"/>
    <property type="match status" value="1"/>
</dbReference>
<reference key="1">
    <citation type="journal article" date="1999" name="Gene">
        <title>Identification and characterization of a protein containing formin homology (FH1/FH2) domains.</title>
        <authorList>
            <person name="Westendorf J.J."/>
            <person name="Mernaugh R."/>
            <person name="Hiebert S.W."/>
        </authorList>
    </citation>
    <scope>NUCLEOTIDE SEQUENCE [MRNA]</scope>
</reference>
<reference key="2">
    <citation type="journal article" date="2003" name="J. Cell Sci.">
        <title>Fhos, a mammalian formin, directly binds to F-actin via a region N-terminal to the FH1 domain and forms a homotypic complex via the FH2 domain to promote actin fiber formation.</title>
        <authorList>
            <person name="Takeya R."/>
            <person name="Sumimoto H."/>
        </authorList>
    </citation>
    <scope>NUCLEOTIDE SEQUENCE [MRNA]</scope>
    <scope>FUNCTION</scope>
    <scope>SUBUNIT</scope>
</reference>
<reference key="3">
    <citation type="journal article" date="2004" name="J. Cell Sci.">
        <title>EBV attachment stimulates FHOS/FHOD1 redistribution and co-aggregation with CD21: formin interactions with the cytoplasmic domain of human CD21.</title>
        <authorList>
            <person name="Gill M.B."/>
            <person name="Roecklein-Canfield J."/>
            <person name="Sage D.R."/>
            <person name="Zambela-Soediono M."/>
            <person name="Longtine N."/>
            <person name="Uknis M."/>
            <person name="Fingeroth J.D."/>
        </authorList>
    </citation>
    <scope>NUCLEOTIDE SEQUENCE [MRNA]</scope>
    <scope>SUBUNIT</scope>
</reference>
<reference key="4">
    <citation type="journal article" date="2004" name="Genome Res.">
        <title>The status, quality, and expansion of the NIH full-length cDNA project: the Mammalian Gene Collection (MGC).</title>
        <authorList>
            <consortium name="The MGC Project Team"/>
        </authorList>
    </citation>
    <scope>NUCLEOTIDE SEQUENCE [LARGE SCALE MRNA]</scope>
    <source>
        <tissue>Prostate</tissue>
    </source>
</reference>
<reference key="5">
    <citation type="journal article" date="2003" name="Nat. Biotechnol.">
        <title>Exploring proteomes and analyzing protein processing by mass spectrometric identification of sorted N-terminal peptides.</title>
        <authorList>
            <person name="Gevaert K."/>
            <person name="Goethals M."/>
            <person name="Martens L."/>
            <person name="Van Damme J."/>
            <person name="Staes A."/>
            <person name="Thomas G.R."/>
            <person name="Vandekerckhove J."/>
        </authorList>
    </citation>
    <scope>PROTEIN SEQUENCE OF 2-19</scope>
    <source>
        <tissue>Platelet</tissue>
    </source>
</reference>
<reference key="6">
    <citation type="submission" date="2005-03" db="EMBL/GenBank/DDBJ databases">
        <authorList>
            <person name="Totoki Y."/>
            <person name="Toyoda A."/>
            <person name="Takeda T."/>
            <person name="Sakaki Y."/>
            <person name="Tanaka A."/>
            <person name="Yokoyama S."/>
            <person name="Ohara O."/>
            <person name="Nagase T."/>
            <person name="Kikuno R.F."/>
        </authorList>
    </citation>
    <scope>NUCLEOTIDE SEQUENCE [LARGE SCALE MRNA] OF 148-1164</scope>
    <source>
        <tissue>Spleen</tissue>
    </source>
</reference>
<reference key="7">
    <citation type="journal article" date="2005" name="Exp. Cell Res.">
        <title>FHOD1 coordinates actin filament and microtubule alignment to mediate cell elongation.</title>
        <authorList>
            <person name="Gasteier J.E."/>
            <person name="Schroeder S."/>
            <person name="Muranyi W."/>
            <person name="Madrid R."/>
            <person name="Benichou S."/>
            <person name="Fackler O.T."/>
        </authorList>
    </citation>
    <scope>FUNCTION</scope>
    <scope>AUTOINHIBITION</scope>
    <scope>SUBCELLULAR LOCATION</scope>
</reference>
<reference key="8">
    <citation type="journal article" date="2006" name="J. Biol. Chem.">
        <title>Biochemical characterization of the diaphanous autoregulatory interaction in the formin homology protein FHOD1.</title>
        <authorList>
            <person name="Schonichen A."/>
            <person name="Alexander M."/>
            <person name="Gasteier J.E."/>
            <person name="Cuesta F.E."/>
            <person name="Fackler O.T."/>
            <person name="Geyer M."/>
        </authorList>
    </citation>
    <scope>DOMAIN DAD</scope>
    <scope>AUTOINHIBITION</scope>
</reference>
<reference key="9">
    <citation type="journal article" date="2008" name="J. Biol. Chem.">
        <title>The diaphanous-related formin FHOD1 associates with ROCK1 and promotes Src-dependent plasma membrane blebbing.</title>
        <authorList>
            <person name="Hannemann S."/>
            <person name="Madrid R."/>
            <person name="Stastna J."/>
            <person name="Kitzing T."/>
            <person name="Gasteier J."/>
            <person name="Schoenichen A."/>
            <person name="Bouchet J."/>
            <person name="Jimenez A."/>
            <person name="Geyer M."/>
            <person name="Grosse R."/>
            <person name="Benichou S."/>
            <person name="Fackler O.T."/>
        </authorList>
    </citation>
    <scope>FUNCTION</scope>
    <scope>SUBCELLULAR LOCATION</scope>
    <scope>INTERACTION WITH ROCK1</scope>
    <scope>PHOSPHORYLATION</scope>
</reference>
<reference key="10">
    <citation type="journal article" date="2008" name="J. Proteome Res.">
        <title>Combining protein-based IMAC, peptide-based IMAC, and MudPIT for efficient phosphoproteomic analysis.</title>
        <authorList>
            <person name="Cantin G.T."/>
            <person name="Yi W."/>
            <person name="Lu B."/>
            <person name="Park S.K."/>
            <person name="Xu T."/>
            <person name="Lee J.-D."/>
            <person name="Yates J.R. III"/>
        </authorList>
    </citation>
    <scope>PHOSPHORYLATION [LARGE SCALE ANALYSIS] AT SER-498</scope>
    <scope>IDENTIFICATION BY MASS SPECTROMETRY [LARGE SCALE ANALYSIS]</scope>
    <source>
        <tissue>Cervix carcinoma</tissue>
    </source>
</reference>
<reference key="11">
    <citation type="journal article" date="2008" name="J. Proteome Res.">
        <title>Phosphoproteome of resting human platelets.</title>
        <authorList>
            <person name="Zahedi R.P."/>
            <person name="Lewandrowski U."/>
            <person name="Wiesner J."/>
            <person name="Wortelkamp S."/>
            <person name="Moebius J."/>
            <person name="Schuetz C."/>
            <person name="Walter U."/>
            <person name="Gambaryan S."/>
            <person name="Sickmann A."/>
        </authorList>
    </citation>
    <scope>PHOSPHORYLATION [LARGE SCALE ANALYSIS] AT SER-367; THR-495; SER-498 AND SER-523</scope>
    <scope>IDENTIFICATION BY MASS SPECTROMETRY [LARGE SCALE ANALYSIS]</scope>
    <source>
        <tissue>Platelet</tissue>
    </source>
</reference>
<reference key="12">
    <citation type="journal article" date="2008" name="Mol. Cell">
        <title>Kinase-selective enrichment enables quantitative phosphoproteomics of the kinome across the cell cycle.</title>
        <authorList>
            <person name="Daub H."/>
            <person name="Olsen J.V."/>
            <person name="Bairlein M."/>
            <person name="Gnad F."/>
            <person name="Oppermann F.S."/>
            <person name="Korner R."/>
            <person name="Greff Z."/>
            <person name="Keri G."/>
            <person name="Stemmann O."/>
            <person name="Mann M."/>
        </authorList>
    </citation>
    <scope>PHOSPHORYLATION [LARGE SCALE ANALYSIS] AT SER-367; SER-486; SER-523 AND SER-573</scope>
    <scope>IDENTIFICATION BY MASS SPECTROMETRY [LARGE SCALE ANALYSIS]</scope>
    <source>
        <tissue>Cervix carcinoma</tissue>
    </source>
</reference>
<reference key="13">
    <citation type="journal article" date="2008" name="Proc. Natl. Acad. Sci. U.S.A.">
        <title>A quantitative atlas of mitotic phosphorylation.</title>
        <authorList>
            <person name="Dephoure N."/>
            <person name="Zhou C."/>
            <person name="Villen J."/>
            <person name="Beausoleil S.A."/>
            <person name="Bakalarski C.E."/>
            <person name="Elledge S.J."/>
            <person name="Gygi S.P."/>
        </authorList>
    </citation>
    <scope>PHOSPHORYLATION [LARGE SCALE ANALYSIS] AT SER-523 AND THR-690</scope>
    <scope>IDENTIFICATION BY MASS SPECTROMETRY [LARGE SCALE ANALYSIS]</scope>
    <source>
        <tissue>Cervix carcinoma</tissue>
    </source>
</reference>
<reference key="14">
    <citation type="journal article" date="2009" name="Anal. Chem.">
        <title>Lys-N and trypsin cover complementary parts of the phosphoproteome in a refined SCX-based approach.</title>
        <authorList>
            <person name="Gauci S."/>
            <person name="Helbig A.O."/>
            <person name="Slijper M."/>
            <person name="Krijgsveld J."/>
            <person name="Heck A.J."/>
            <person name="Mohammed S."/>
        </authorList>
    </citation>
    <scope>IDENTIFICATION BY MASS SPECTROMETRY [LARGE SCALE ANALYSIS]</scope>
</reference>
<reference key="15">
    <citation type="journal article" date="2011" name="BMC Syst. Biol.">
        <title>Initial characterization of the human central proteome.</title>
        <authorList>
            <person name="Burkard T.R."/>
            <person name="Planyavsky M."/>
            <person name="Kaupe I."/>
            <person name="Breitwieser F.P."/>
            <person name="Buerckstuemmer T."/>
            <person name="Bennett K.L."/>
            <person name="Superti-Furga G."/>
            <person name="Colinge J."/>
        </authorList>
    </citation>
    <scope>IDENTIFICATION BY MASS SPECTROMETRY [LARGE SCALE ANALYSIS]</scope>
</reference>
<reference key="16">
    <citation type="journal article" date="2013" name="J. Proteome Res.">
        <title>Toward a comprehensive characterization of a human cancer cell phosphoproteome.</title>
        <authorList>
            <person name="Zhou H."/>
            <person name="Di Palma S."/>
            <person name="Preisinger C."/>
            <person name="Peng M."/>
            <person name="Polat A.N."/>
            <person name="Heck A.J."/>
            <person name="Mohammed S."/>
        </authorList>
    </citation>
    <scope>PHOSPHORYLATION [LARGE SCALE ANALYSIS] AT SER-486; SER-498; SER-523 AND THR-690</scope>
    <scope>IDENTIFICATION BY MASS SPECTROMETRY [LARGE SCALE ANALYSIS]</scope>
    <source>
        <tissue>Cervix carcinoma</tissue>
        <tissue>Erythroleukemia</tissue>
    </source>
</reference>
<reference key="17">
    <citation type="journal article" date="2014" name="J. Proteomics">
        <title>An enzyme assisted RP-RPLC approach for in-depth analysis of human liver phosphoproteome.</title>
        <authorList>
            <person name="Bian Y."/>
            <person name="Song C."/>
            <person name="Cheng K."/>
            <person name="Dong M."/>
            <person name="Wang F."/>
            <person name="Huang J."/>
            <person name="Sun D."/>
            <person name="Wang L."/>
            <person name="Ye M."/>
            <person name="Zou H."/>
        </authorList>
    </citation>
    <scope>PHOSPHORYLATION [LARGE SCALE ANALYSIS] AT SER-573</scope>
    <scope>IDENTIFICATION BY MASS SPECTROMETRY [LARGE SCALE ANALYSIS]</scope>
    <source>
        <tissue>Liver</tissue>
    </source>
</reference>
<reference key="18">
    <citation type="journal article" date="2015" name="Proteomics">
        <title>N-terminome analysis of the human mitochondrial proteome.</title>
        <authorList>
            <person name="Vaca Jacome A.S."/>
            <person name="Rabilloud T."/>
            <person name="Schaeffer-Reiss C."/>
            <person name="Rompais M."/>
            <person name="Ayoub D."/>
            <person name="Lane L."/>
            <person name="Bairoch A."/>
            <person name="Van Dorsselaer A."/>
            <person name="Carapito C."/>
        </authorList>
    </citation>
    <scope>IDENTIFICATION BY MASS SPECTROMETRY [LARGE SCALE ANALYSIS]</scope>
</reference>